<name>ACPS_RHOPS</name>
<evidence type="ECO:0000255" key="1">
    <source>
        <dbReference type="HAMAP-Rule" id="MF_00101"/>
    </source>
</evidence>
<keyword id="KW-0963">Cytoplasm</keyword>
<keyword id="KW-0275">Fatty acid biosynthesis</keyword>
<keyword id="KW-0276">Fatty acid metabolism</keyword>
<keyword id="KW-0444">Lipid biosynthesis</keyword>
<keyword id="KW-0443">Lipid metabolism</keyword>
<keyword id="KW-0460">Magnesium</keyword>
<keyword id="KW-0479">Metal-binding</keyword>
<keyword id="KW-0808">Transferase</keyword>
<protein>
    <recommendedName>
        <fullName evidence="1">Holo-[acyl-carrier-protein] synthase</fullName>
        <shortName evidence="1">Holo-ACP synthase</shortName>
        <ecNumber evidence="1">2.7.8.7</ecNumber>
    </recommendedName>
    <alternativeName>
        <fullName evidence="1">4'-phosphopantetheinyl transferase AcpS</fullName>
    </alternativeName>
</protein>
<gene>
    <name evidence="1" type="primary">acpS</name>
    <name type="ordered locus">RPD_2649</name>
</gene>
<reference key="1">
    <citation type="submission" date="2006-03" db="EMBL/GenBank/DDBJ databases">
        <title>Complete sequence of Rhodopseudomonas palustris BisB5.</title>
        <authorList>
            <consortium name="US DOE Joint Genome Institute"/>
            <person name="Copeland A."/>
            <person name="Lucas S."/>
            <person name="Lapidus A."/>
            <person name="Barry K."/>
            <person name="Detter J.C."/>
            <person name="Glavina del Rio T."/>
            <person name="Hammon N."/>
            <person name="Israni S."/>
            <person name="Dalin E."/>
            <person name="Tice H."/>
            <person name="Pitluck S."/>
            <person name="Chain P."/>
            <person name="Malfatti S."/>
            <person name="Shin M."/>
            <person name="Vergez L."/>
            <person name="Schmutz J."/>
            <person name="Larimer F."/>
            <person name="Land M."/>
            <person name="Hauser L."/>
            <person name="Pelletier D.A."/>
            <person name="Kyrpides N."/>
            <person name="Lykidis A."/>
            <person name="Oda Y."/>
            <person name="Harwood C.S."/>
            <person name="Richardson P."/>
        </authorList>
    </citation>
    <scope>NUCLEOTIDE SEQUENCE [LARGE SCALE GENOMIC DNA]</scope>
    <source>
        <strain>BisB5</strain>
    </source>
</reference>
<sequence>MIIGIGSDLIDITRIAKVIERHGERFLDRIFTETERARAGRRDKQPNLVAATYAKRFAAKEACSKALGTGIRQGVWWRDMGVVNLPGGRPTMALTGGAKARLDALTPAGMIAQIDLSITDEWPLAQAFVVISAIPATAS</sequence>
<feature type="chain" id="PRO_1000008480" description="Holo-[acyl-carrier-protein] synthase">
    <location>
        <begin position="1"/>
        <end position="139"/>
    </location>
</feature>
<feature type="binding site" evidence="1">
    <location>
        <position position="8"/>
    </location>
    <ligand>
        <name>Mg(2+)</name>
        <dbReference type="ChEBI" id="CHEBI:18420"/>
    </ligand>
</feature>
<feature type="binding site" evidence="1">
    <location>
        <position position="61"/>
    </location>
    <ligand>
        <name>Mg(2+)</name>
        <dbReference type="ChEBI" id="CHEBI:18420"/>
    </ligand>
</feature>
<comment type="function">
    <text evidence="1">Transfers the 4'-phosphopantetheine moiety from coenzyme A to a Ser of acyl-carrier-protein.</text>
</comment>
<comment type="catalytic activity">
    <reaction evidence="1">
        <text>apo-[ACP] + CoA = holo-[ACP] + adenosine 3',5'-bisphosphate + H(+)</text>
        <dbReference type="Rhea" id="RHEA:12068"/>
        <dbReference type="Rhea" id="RHEA-COMP:9685"/>
        <dbReference type="Rhea" id="RHEA-COMP:9690"/>
        <dbReference type="ChEBI" id="CHEBI:15378"/>
        <dbReference type="ChEBI" id="CHEBI:29999"/>
        <dbReference type="ChEBI" id="CHEBI:57287"/>
        <dbReference type="ChEBI" id="CHEBI:58343"/>
        <dbReference type="ChEBI" id="CHEBI:64479"/>
        <dbReference type="EC" id="2.7.8.7"/>
    </reaction>
</comment>
<comment type="cofactor">
    <cofactor evidence="1">
        <name>Mg(2+)</name>
        <dbReference type="ChEBI" id="CHEBI:18420"/>
    </cofactor>
</comment>
<comment type="subcellular location">
    <subcellularLocation>
        <location evidence="1">Cytoplasm</location>
    </subcellularLocation>
</comment>
<comment type="similarity">
    <text evidence="1">Belongs to the P-Pant transferase superfamily. AcpS family.</text>
</comment>
<proteinExistence type="inferred from homology"/>
<dbReference type="EC" id="2.7.8.7" evidence="1"/>
<dbReference type="EMBL" id="CP000283">
    <property type="protein sequence ID" value="ABE39878.1"/>
    <property type="molecule type" value="Genomic_DNA"/>
</dbReference>
<dbReference type="SMR" id="Q136W1"/>
<dbReference type="STRING" id="316057.RPD_2649"/>
<dbReference type="KEGG" id="rpd:RPD_2649"/>
<dbReference type="eggNOG" id="COG0736">
    <property type="taxonomic scope" value="Bacteria"/>
</dbReference>
<dbReference type="HOGENOM" id="CLU_089696_0_2_5"/>
<dbReference type="BioCyc" id="RPAL316057:RPD_RS13325-MONOMER"/>
<dbReference type="Proteomes" id="UP000001818">
    <property type="component" value="Chromosome"/>
</dbReference>
<dbReference type="GO" id="GO:0005737">
    <property type="term" value="C:cytoplasm"/>
    <property type="evidence" value="ECO:0007669"/>
    <property type="project" value="UniProtKB-SubCell"/>
</dbReference>
<dbReference type="GO" id="GO:0008897">
    <property type="term" value="F:holo-[acyl-carrier-protein] synthase activity"/>
    <property type="evidence" value="ECO:0007669"/>
    <property type="project" value="UniProtKB-UniRule"/>
</dbReference>
<dbReference type="GO" id="GO:0000287">
    <property type="term" value="F:magnesium ion binding"/>
    <property type="evidence" value="ECO:0007669"/>
    <property type="project" value="UniProtKB-UniRule"/>
</dbReference>
<dbReference type="GO" id="GO:0006633">
    <property type="term" value="P:fatty acid biosynthetic process"/>
    <property type="evidence" value="ECO:0007669"/>
    <property type="project" value="UniProtKB-UniRule"/>
</dbReference>
<dbReference type="Gene3D" id="3.90.470.20">
    <property type="entry name" value="4'-phosphopantetheinyl transferase domain"/>
    <property type="match status" value="1"/>
</dbReference>
<dbReference type="HAMAP" id="MF_00101">
    <property type="entry name" value="AcpS"/>
    <property type="match status" value="1"/>
</dbReference>
<dbReference type="InterPro" id="IPR008278">
    <property type="entry name" value="4-PPantetheinyl_Trfase_dom"/>
</dbReference>
<dbReference type="InterPro" id="IPR037143">
    <property type="entry name" value="4-PPantetheinyl_Trfase_dom_sf"/>
</dbReference>
<dbReference type="InterPro" id="IPR002582">
    <property type="entry name" value="ACPS"/>
</dbReference>
<dbReference type="InterPro" id="IPR004568">
    <property type="entry name" value="Ppantetheine-prot_Trfase_dom"/>
</dbReference>
<dbReference type="NCBIfam" id="TIGR00516">
    <property type="entry name" value="acpS"/>
    <property type="match status" value="1"/>
</dbReference>
<dbReference type="NCBIfam" id="TIGR00556">
    <property type="entry name" value="pantethn_trn"/>
    <property type="match status" value="1"/>
</dbReference>
<dbReference type="Pfam" id="PF01648">
    <property type="entry name" value="ACPS"/>
    <property type="match status" value="1"/>
</dbReference>
<dbReference type="SUPFAM" id="SSF56214">
    <property type="entry name" value="4'-phosphopantetheinyl transferase"/>
    <property type="match status" value="1"/>
</dbReference>
<organism>
    <name type="scientific">Rhodopseudomonas palustris (strain BisB5)</name>
    <dbReference type="NCBI Taxonomy" id="316057"/>
    <lineage>
        <taxon>Bacteria</taxon>
        <taxon>Pseudomonadati</taxon>
        <taxon>Pseudomonadota</taxon>
        <taxon>Alphaproteobacteria</taxon>
        <taxon>Hyphomicrobiales</taxon>
        <taxon>Nitrobacteraceae</taxon>
        <taxon>Rhodopseudomonas</taxon>
    </lineage>
</organism>
<accession>Q136W1</accession>